<sequence>MNKWVIGIDLSTTITGVAILRNEQIIKTFAVAFDNFNEKNLYNNVIRLIKEINLNVWLLADDDYYIGIEVANFSNPKLTQRFSIYAGMIIALMSQVLRDFNAEFKMFNANAWQLKIPQIQYNTLRKDRKLITKNLMIKTFNIKSNLNEDEYDALAIAYFYDSINSTLEQEEITKAKKIVKMNKVKQQLSISKKINKLLEKKSKLKKATAISKVDEQIEELKKLNK</sequence>
<keyword id="KW-1185">Reference proteome</keyword>
<feature type="chain" id="PRO_0000220816" description="Uncharacterized protein UU157">
    <location>
        <begin position="1"/>
        <end position="225"/>
    </location>
</feature>
<name>Y157_UREPA</name>
<accession>Q9PQY7</accession>
<protein>
    <recommendedName>
        <fullName>Uncharacterized protein UU157</fullName>
    </recommendedName>
</protein>
<proteinExistence type="predicted"/>
<organism>
    <name type="scientific">Ureaplasma parvum serovar 3 (strain ATCC 700970)</name>
    <dbReference type="NCBI Taxonomy" id="273119"/>
    <lineage>
        <taxon>Bacteria</taxon>
        <taxon>Bacillati</taxon>
        <taxon>Mycoplasmatota</taxon>
        <taxon>Mycoplasmoidales</taxon>
        <taxon>Mycoplasmoidaceae</taxon>
        <taxon>Ureaplasma</taxon>
    </lineage>
</organism>
<reference key="1">
    <citation type="journal article" date="2000" name="Nature">
        <title>The complete sequence of the mucosal pathogen Ureaplasma urealyticum.</title>
        <authorList>
            <person name="Glass J.I."/>
            <person name="Lefkowitz E.J."/>
            <person name="Glass J.S."/>
            <person name="Heiner C.R."/>
            <person name="Chen E.Y."/>
            <person name="Cassell G.H."/>
        </authorList>
    </citation>
    <scope>NUCLEOTIDE SEQUENCE [LARGE SCALE GENOMIC DNA]</scope>
    <source>
        <strain>ATCC 700970</strain>
    </source>
</reference>
<gene>
    <name type="ordered locus">UU157</name>
</gene>
<dbReference type="EMBL" id="AF222894">
    <property type="protein sequence ID" value="AAF30563.1"/>
    <property type="molecule type" value="Genomic_DNA"/>
</dbReference>
<dbReference type="RefSeq" id="WP_010891691.1">
    <property type="nucleotide sequence ID" value="NC_002162.1"/>
</dbReference>
<dbReference type="STRING" id="273119.UU157"/>
<dbReference type="EnsemblBacteria" id="AAF30563">
    <property type="protein sequence ID" value="AAF30563"/>
    <property type="gene ID" value="UU157"/>
</dbReference>
<dbReference type="GeneID" id="29672682"/>
<dbReference type="KEGG" id="uur:UU157"/>
<dbReference type="PATRIC" id="fig|273119.6.peg.163"/>
<dbReference type="HOGENOM" id="CLU_1229473_0_0_14"/>
<dbReference type="OrthoDB" id="9891141at2"/>
<dbReference type="Proteomes" id="UP000000423">
    <property type="component" value="Chromosome"/>
</dbReference>
<dbReference type="GO" id="GO:0003676">
    <property type="term" value="F:nucleic acid binding"/>
    <property type="evidence" value="ECO:0007669"/>
    <property type="project" value="InterPro"/>
</dbReference>
<dbReference type="Gene3D" id="3.30.420.10">
    <property type="entry name" value="Ribonuclease H-like superfamily/Ribonuclease H"/>
    <property type="match status" value="1"/>
</dbReference>
<dbReference type="InterPro" id="IPR012337">
    <property type="entry name" value="RNaseH-like_sf"/>
</dbReference>
<dbReference type="InterPro" id="IPR036397">
    <property type="entry name" value="RNaseH_sf"/>
</dbReference>
<dbReference type="SUPFAM" id="SSF53098">
    <property type="entry name" value="Ribonuclease H-like"/>
    <property type="match status" value="1"/>
</dbReference>